<sequence>MSIITDVYAREVLDSRGNPTLEVEVYTESGAFGRGMVPSGASTGEHEAVELRDGDKARYGGLGTQKAVDNVNNVIAEHIIGFDVRDQQGIDRAMIALDGTPNKGKLGANAILGVSIAVARAAADYLEVPLYSYLGGFNTKVLPTPMMNIINGGSHSDAPIAFQEFMIVPAGAPTFKEALRWGAEIFHALKKILKERGLETAVGDEGGFAPRFDGTEDGVETIIKAIEAAGYVPGKDVFIGLDCASSEFYDAERKVYDYTKFEGEGAAVRTAAEQIDYLEELVNKYPIITIEDGMDENDWDGWKALTERLGDKVQLVGDDFFVTNTAYLEKGIAEHAANSILIKVNQIGTLTETFDAIEMAKEAGYTAVVSHRSGETEDSTIADIAVATNAGQIKTGSLSRTDRIAKYNQLLRIEDQLGEVAEYRGLKSFYNLKK</sequence>
<protein>
    <recommendedName>
        <fullName evidence="1">Enolase</fullName>
        <ecNumber evidence="1">4.2.1.11</ecNumber>
    </recommendedName>
    <alternativeName>
        <fullName evidence="1">2-phospho-D-glycerate hydro-lyase</fullName>
    </alternativeName>
    <alternativeName>
        <fullName evidence="1">2-phosphoglycerate dehydratase</fullName>
    </alternativeName>
</protein>
<comment type="function">
    <text evidence="1">Catalyzes the reversible conversion of 2-phosphoglycerate (2-PG) into phosphoenolpyruvate (PEP). It is essential for the degradation of carbohydrates via glycolysis.</text>
</comment>
<comment type="catalytic activity">
    <reaction evidence="1">
        <text>(2R)-2-phosphoglycerate = phosphoenolpyruvate + H2O</text>
        <dbReference type="Rhea" id="RHEA:10164"/>
        <dbReference type="ChEBI" id="CHEBI:15377"/>
        <dbReference type="ChEBI" id="CHEBI:58289"/>
        <dbReference type="ChEBI" id="CHEBI:58702"/>
        <dbReference type="EC" id="4.2.1.11"/>
    </reaction>
</comment>
<comment type="cofactor">
    <cofactor evidence="1">
        <name>Mg(2+)</name>
        <dbReference type="ChEBI" id="CHEBI:18420"/>
    </cofactor>
    <text evidence="1">Binds a second Mg(2+) ion via substrate during catalysis.</text>
</comment>
<comment type="pathway">
    <text evidence="1">Carbohydrate degradation; glycolysis; pyruvate from D-glyceraldehyde 3-phosphate: step 4/5.</text>
</comment>
<comment type="subcellular location">
    <subcellularLocation>
        <location evidence="1">Cytoplasm</location>
    </subcellularLocation>
    <subcellularLocation>
        <location evidence="1">Secreted</location>
    </subcellularLocation>
    <subcellularLocation>
        <location evidence="1">Cell surface</location>
    </subcellularLocation>
    <text evidence="1">Fractions of enolase are present in both the cytoplasm and on the cell surface.</text>
</comment>
<comment type="similarity">
    <text evidence="1">Belongs to the enolase family.</text>
</comment>
<proteinExistence type="inferred from homology"/>
<gene>
    <name evidence="1" type="primary">eno</name>
    <name type="ordered locus">str0635</name>
</gene>
<dbReference type="EC" id="4.2.1.11" evidence="1"/>
<dbReference type="EMBL" id="CP000024">
    <property type="protein sequence ID" value="AAV62231.1"/>
    <property type="molecule type" value="Genomic_DNA"/>
</dbReference>
<dbReference type="RefSeq" id="WP_011225708.1">
    <property type="nucleotide sequence ID" value="NC_006449.1"/>
</dbReference>
<dbReference type="SMR" id="Q5M0M5"/>
<dbReference type="GeneID" id="66898542"/>
<dbReference type="KEGG" id="stc:str0635"/>
<dbReference type="HOGENOM" id="CLU_031223_2_1_9"/>
<dbReference type="UniPathway" id="UPA00109">
    <property type="reaction ID" value="UER00187"/>
</dbReference>
<dbReference type="GO" id="GO:0009986">
    <property type="term" value="C:cell surface"/>
    <property type="evidence" value="ECO:0007669"/>
    <property type="project" value="UniProtKB-SubCell"/>
</dbReference>
<dbReference type="GO" id="GO:0005576">
    <property type="term" value="C:extracellular region"/>
    <property type="evidence" value="ECO:0007669"/>
    <property type="project" value="UniProtKB-SubCell"/>
</dbReference>
<dbReference type="GO" id="GO:0009274">
    <property type="term" value="C:peptidoglycan-based cell wall"/>
    <property type="evidence" value="ECO:0007669"/>
    <property type="project" value="UniProtKB-ARBA"/>
</dbReference>
<dbReference type="GO" id="GO:0000015">
    <property type="term" value="C:phosphopyruvate hydratase complex"/>
    <property type="evidence" value="ECO:0007669"/>
    <property type="project" value="InterPro"/>
</dbReference>
<dbReference type="GO" id="GO:0000287">
    <property type="term" value="F:magnesium ion binding"/>
    <property type="evidence" value="ECO:0007669"/>
    <property type="project" value="UniProtKB-UniRule"/>
</dbReference>
<dbReference type="GO" id="GO:0004634">
    <property type="term" value="F:phosphopyruvate hydratase activity"/>
    <property type="evidence" value="ECO:0007669"/>
    <property type="project" value="UniProtKB-UniRule"/>
</dbReference>
<dbReference type="GO" id="GO:0006096">
    <property type="term" value="P:glycolytic process"/>
    <property type="evidence" value="ECO:0007669"/>
    <property type="project" value="UniProtKB-UniRule"/>
</dbReference>
<dbReference type="CDD" id="cd03313">
    <property type="entry name" value="enolase"/>
    <property type="match status" value="1"/>
</dbReference>
<dbReference type="FunFam" id="3.20.20.120:FF:000001">
    <property type="entry name" value="Enolase"/>
    <property type="match status" value="1"/>
</dbReference>
<dbReference type="FunFam" id="3.30.390.10:FF:000001">
    <property type="entry name" value="Enolase"/>
    <property type="match status" value="1"/>
</dbReference>
<dbReference type="Gene3D" id="3.20.20.120">
    <property type="entry name" value="Enolase-like C-terminal domain"/>
    <property type="match status" value="1"/>
</dbReference>
<dbReference type="Gene3D" id="3.30.390.10">
    <property type="entry name" value="Enolase-like, N-terminal domain"/>
    <property type="match status" value="1"/>
</dbReference>
<dbReference type="HAMAP" id="MF_00318">
    <property type="entry name" value="Enolase"/>
    <property type="match status" value="1"/>
</dbReference>
<dbReference type="InterPro" id="IPR000941">
    <property type="entry name" value="Enolase"/>
</dbReference>
<dbReference type="InterPro" id="IPR036849">
    <property type="entry name" value="Enolase-like_C_sf"/>
</dbReference>
<dbReference type="InterPro" id="IPR029017">
    <property type="entry name" value="Enolase-like_N"/>
</dbReference>
<dbReference type="InterPro" id="IPR020810">
    <property type="entry name" value="Enolase_C"/>
</dbReference>
<dbReference type="InterPro" id="IPR020809">
    <property type="entry name" value="Enolase_CS"/>
</dbReference>
<dbReference type="InterPro" id="IPR020811">
    <property type="entry name" value="Enolase_N"/>
</dbReference>
<dbReference type="NCBIfam" id="TIGR01060">
    <property type="entry name" value="eno"/>
    <property type="match status" value="1"/>
</dbReference>
<dbReference type="PANTHER" id="PTHR11902">
    <property type="entry name" value="ENOLASE"/>
    <property type="match status" value="1"/>
</dbReference>
<dbReference type="PANTHER" id="PTHR11902:SF1">
    <property type="entry name" value="ENOLASE"/>
    <property type="match status" value="1"/>
</dbReference>
<dbReference type="Pfam" id="PF00113">
    <property type="entry name" value="Enolase_C"/>
    <property type="match status" value="1"/>
</dbReference>
<dbReference type="Pfam" id="PF03952">
    <property type="entry name" value="Enolase_N"/>
    <property type="match status" value="1"/>
</dbReference>
<dbReference type="PIRSF" id="PIRSF001400">
    <property type="entry name" value="Enolase"/>
    <property type="match status" value="1"/>
</dbReference>
<dbReference type="PRINTS" id="PR00148">
    <property type="entry name" value="ENOLASE"/>
</dbReference>
<dbReference type="SFLD" id="SFLDF00002">
    <property type="entry name" value="enolase"/>
    <property type="match status" value="1"/>
</dbReference>
<dbReference type="SFLD" id="SFLDG00178">
    <property type="entry name" value="enolase"/>
    <property type="match status" value="1"/>
</dbReference>
<dbReference type="SMART" id="SM01192">
    <property type="entry name" value="Enolase_C"/>
    <property type="match status" value="1"/>
</dbReference>
<dbReference type="SMART" id="SM01193">
    <property type="entry name" value="Enolase_N"/>
    <property type="match status" value="1"/>
</dbReference>
<dbReference type="SUPFAM" id="SSF51604">
    <property type="entry name" value="Enolase C-terminal domain-like"/>
    <property type="match status" value="1"/>
</dbReference>
<dbReference type="SUPFAM" id="SSF54826">
    <property type="entry name" value="Enolase N-terminal domain-like"/>
    <property type="match status" value="1"/>
</dbReference>
<dbReference type="PROSITE" id="PS00164">
    <property type="entry name" value="ENOLASE"/>
    <property type="match status" value="1"/>
</dbReference>
<name>ENO_STRT1</name>
<evidence type="ECO:0000255" key="1">
    <source>
        <dbReference type="HAMAP-Rule" id="MF_00318"/>
    </source>
</evidence>
<organism>
    <name type="scientific">Streptococcus thermophilus (strain CNRZ 1066)</name>
    <dbReference type="NCBI Taxonomy" id="299768"/>
    <lineage>
        <taxon>Bacteria</taxon>
        <taxon>Bacillati</taxon>
        <taxon>Bacillota</taxon>
        <taxon>Bacilli</taxon>
        <taxon>Lactobacillales</taxon>
        <taxon>Streptococcaceae</taxon>
        <taxon>Streptococcus</taxon>
    </lineage>
</organism>
<reference key="1">
    <citation type="journal article" date="2004" name="Nat. Biotechnol.">
        <title>Complete sequence and comparative genome analysis of the dairy bacterium Streptococcus thermophilus.</title>
        <authorList>
            <person name="Bolotin A."/>
            <person name="Quinquis B."/>
            <person name="Renault P."/>
            <person name="Sorokin A."/>
            <person name="Ehrlich S.D."/>
            <person name="Kulakauskas S."/>
            <person name="Lapidus A."/>
            <person name="Goltsman E."/>
            <person name="Mazur M."/>
            <person name="Pusch G.D."/>
            <person name="Fonstein M."/>
            <person name="Overbeek R."/>
            <person name="Kyprides N."/>
            <person name="Purnelle B."/>
            <person name="Prozzi D."/>
            <person name="Ngui K."/>
            <person name="Masuy D."/>
            <person name="Hancy F."/>
            <person name="Burteau S."/>
            <person name="Boutry M."/>
            <person name="Delcour J."/>
            <person name="Goffeau A."/>
            <person name="Hols P."/>
        </authorList>
    </citation>
    <scope>NUCLEOTIDE SEQUENCE [LARGE SCALE GENOMIC DNA]</scope>
    <source>
        <strain>CNRZ 1066</strain>
    </source>
</reference>
<keyword id="KW-0963">Cytoplasm</keyword>
<keyword id="KW-0324">Glycolysis</keyword>
<keyword id="KW-0456">Lyase</keyword>
<keyword id="KW-0460">Magnesium</keyword>
<keyword id="KW-0479">Metal-binding</keyword>
<keyword id="KW-0964">Secreted</keyword>
<feature type="chain" id="PRO_0000133986" description="Enolase">
    <location>
        <begin position="1"/>
        <end position="434"/>
    </location>
</feature>
<feature type="active site" description="Proton donor" evidence="1">
    <location>
        <position position="205"/>
    </location>
</feature>
<feature type="active site" description="Proton acceptor" evidence="1">
    <location>
        <position position="343"/>
    </location>
</feature>
<feature type="binding site" evidence="1">
    <location>
        <position position="163"/>
    </location>
    <ligand>
        <name>(2R)-2-phosphoglycerate</name>
        <dbReference type="ChEBI" id="CHEBI:58289"/>
    </ligand>
</feature>
<feature type="binding site" evidence="1">
    <location>
        <position position="242"/>
    </location>
    <ligand>
        <name>Mg(2+)</name>
        <dbReference type="ChEBI" id="CHEBI:18420"/>
    </ligand>
</feature>
<feature type="binding site" evidence="1">
    <location>
        <position position="291"/>
    </location>
    <ligand>
        <name>Mg(2+)</name>
        <dbReference type="ChEBI" id="CHEBI:18420"/>
    </ligand>
</feature>
<feature type="binding site" evidence="1">
    <location>
        <position position="318"/>
    </location>
    <ligand>
        <name>Mg(2+)</name>
        <dbReference type="ChEBI" id="CHEBI:18420"/>
    </ligand>
</feature>
<feature type="binding site" evidence="1">
    <location>
        <position position="343"/>
    </location>
    <ligand>
        <name>(2R)-2-phosphoglycerate</name>
        <dbReference type="ChEBI" id="CHEBI:58289"/>
    </ligand>
</feature>
<feature type="binding site" evidence="1">
    <location>
        <position position="372"/>
    </location>
    <ligand>
        <name>(2R)-2-phosphoglycerate</name>
        <dbReference type="ChEBI" id="CHEBI:58289"/>
    </ligand>
</feature>
<feature type="binding site" evidence="1">
    <location>
        <position position="373"/>
    </location>
    <ligand>
        <name>(2R)-2-phosphoglycerate</name>
        <dbReference type="ChEBI" id="CHEBI:58289"/>
    </ligand>
</feature>
<feature type="binding site" evidence="1">
    <location>
        <position position="394"/>
    </location>
    <ligand>
        <name>(2R)-2-phosphoglycerate</name>
        <dbReference type="ChEBI" id="CHEBI:58289"/>
    </ligand>
</feature>
<accession>Q5M0M5</accession>